<reference key="1">
    <citation type="journal article" date="1997" name="Mol. Biol. Evol.">
        <title>The main features of the craniate mitochondrial DNA between the ND1 and the COI genes were established in the common ancestor with the lancelet.</title>
        <authorList>
            <person name="Delarbre C."/>
            <person name="Barriel V."/>
            <person name="Tillier S."/>
            <person name="Janvier P."/>
            <person name="Gachelin G."/>
        </authorList>
    </citation>
    <scope>NUCLEOTIDE SEQUENCE [GENOMIC DNA]</scope>
</reference>
<comment type="function">
    <text evidence="1">Core subunit of the mitochondrial membrane respiratory chain NADH dehydrogenase (Complex I) that is believed to belong to the minimal assembly required for catalysis. Complex I functions in the transfer of electrons from NADH to the respiratory chain. The immediate electron acceptor for the enzyme is believed to be ubiquinone (By similarity).</text>
</comment>
<comment type="catalytic activity">
    <reaction>
        <text>a ubiquinone + NADH + 5 H(+)(in) = a ubiquinol + NAD(+) + 4 H(+)(out)</text>
        <dbReference type="Rhea" id="RHEA:29091"/>
        <dbReference type="Rhea" id="RHEA-COMP:9565"/>
        <dbReference type="Rhea" id="RHEA-COMP:9566"/>
        <dbReference type="ChEBI" id="CHEBI:15378"/>
        <dbReference type="ChEBI" id="CHEBI:16389"/>
        <dbReference type="ChEBI" id="CHEBI:17976"/>
        <dbReference type="ChEBI" id="CHEBI:57540"/>
        <dbReference type="ChEBI" id="CHEBI:57945"/>
        <dbReference type="EC" id="7.1.1.2"/>
    </reaction>
</comment>
<comment type="subcellular location">
    <subcellularLocation>
        <location>Mitochondrion inner membrane</location>
        <topology>Multi-pass membrane protein</topology>
    </subcellularLocation>
</comment>
<comment type="similarity">
    <text evidence="3">Belongs to the complex I subunit 2 family.</text>
</comment>
<keyword id="KW-0249">Electron transport</keyword>
<keyword id="KW-0472">Membrane</keyword>
<keyword id="KW-0496">Mitochondrion</keyword>
<keyword id="KW-0999">Mitochondrion inner membrane</keyword>
<keyword id="KW-0520">NAD</keyword>
<keyword id="KW-0679">Respiratory chain</keyword>
<keyword id="KW-1278">Translocase</keyword>
<keyword id="KW-0812">Transmembrane</keyword>
<keyword id="KW-1133">Transmembrane helix</keyword>
<keyword id="KW-0813">Transport</keyword>
<keyword id="KW-0830">Ubiquinone</keyword>
<proteinExistence type="inferred from homology"/>
<organism>
    <name type="scientific">Lampetra fluviatilis</name>
    <name type="common">European river lamprey</name>
    <name type="synonym">Petromyzon fluviatilis</name>
    <dbReference type="NCBI Taxonomy" id="7748"/>
    <lineage>
        <taxon>Eukaryota</taxon>
        <taxon>Metazoa</taxon>
        <taxon>Chordata</taxon>
        <taxon>Craniata</taxon>
        <taxon>Vertebrata</taxon>
        <taxon>Cyclostomata</taxon>
        <taxon>Hyperoartia</taxon>
        <taxon>Petromyzontiformes</taxon>
        <taxon>Petromyzontidae</taxon>
        <taxon>Lampetra</taxon>
    </lineage>
</organism>
<name>NU2M_LAMFL</name>
<accession>O21070</accession>
<feature type="chain" id="PRO_0000117598" description="NADH-ubiquinone oxidoreductase chain 2">
    <location>
        <begin position="1"/>
        <end position="347"/>
    </location>
</feature>
<feature type="transmembrane region" description="Helical" evidence="2">
    <location>
        <begin position="2"/>
        <end position="22"/>
    </location>
</feature>
<feature type="transmembrane region" description="Helical" evidence="2">
    <location>
        <begin position="26"/>
        <end position="46"/>
    </location>
</feature>
<feature type="transmembrane region" description="Helical" evidence="2">
    <location>
        <begin position="60"/>
        <end position="80"/>
    </location>
</feature>
<feature type="transmembrane region" description="Helical" evidence="2">
    <location>
        <begin position="94"/>
        <end position="114"/>
    </location>
</feature>
<feature type="transmembrane region" description="Helical" evidence="2">
    <location>
        <begin position="127"/>
        <end position="147"/>
    </location>
</feature>
<feature type="transmembrane region" description="Helical" evidence="2">
    <location>
        <begin position="151"/>
        <end position="171"/>
    </location>
</feature>
<feature type="transmembrane region" description="Helical" evidence="2">
    <location>
        <begin position="179"/>
        <end position="197"/>
    </location>
</feature>
<feature type="transmembrane region" description="Helical" evidence="2">
    <location>
        <begin position="201"/>
        <end position="223"/>
    </location>
</feature>
<feature type="transmembrane region" description="Helical" evidence="2">
    <location>
        <begin position="242"/>
        <end position="262"/>
    </location>
</feature>
<feature type="transmembrane region" description="Helical" evidence="2">
    <location>
        <begin position="274"/>
        <end position="294"/>
    </location>
</feature>
<feature type="transmembrane region" description="Helical" evidence="2">
    <location>
        <begin position="325"/>
        <end position="345"/>
    </location>
</feature>
<dbReference type="EC" id="7.1.1.2"/>
<dbReference type="EMBL" id="Y09528">
    <property type="protein sequence ID" value="CAA70720.1"/>
    <property type="molecule type" value="Genomic_DNA"/>
</dbReference>
<dbReference type="PIR" id="T13891">
    <property type="entry name" value="T13891"/>
</dbReference>
<dbReference type="RefSeq" id="NP_033639.1">
    <property type="nucleotide sequence ID" value="NC_001131.1"/>
</dbReference>
<dbReference type="SMR" id="O21070"/>
<dbReference type="GeneID" id="808821"/>
<dbReference type="CTD" id="4536"/>
<dbReference type="GO" id="GO:0005743">
    <property type="term" value="C:mitochondrial inner membrane"/>
    <property type="evidence" value="ECO:0007669"/>
    <property type="project" value="UniProtKB-SubCell"/>
</dbReference>
<dbReference type="GO" id="GO:0008137">
    <property type="term" value="F:NADH dehydrogenase (ubiquinone) activity"/>
    <property type="evidence" value="ECO:0007669"/>
    <property type="project" value="UniProtKB-EC"/>
</dbReference>
<dbReference type="GO" id="GO:0006120">
    <property type="term" value="P:mitochondrial electron transport, NADH to ubiquinone"/>
    <property type="evidence" value="ECO:0007669"/>
    <property type="project" value="InterPro"/>
</dbReference>
<dbReference type="InterPro" id="IPR050175">
    <property type="entry name" value="Complex_I_Subunit_2"/>
</dbReference>
<dbReference type="InterPro" id="IPR003917">
    <property type="entry name" value="NADH_UbQ_OxRdtase_chain2"/>
</dbReference>
<dbReference type="InterPro" id="IPR001750">
    <property type="entry name" value="ND/Mrp_TM"/>
</dbReference>
<dbReference type="PANTHER" id="PTHR46552">
    <property type="entry name" value="NADH-UBIQUINONE OXIDOREDUCTASE CHAIN 2"/>
    <property type="match status" value="1"/>
</dbReference>
<dbReference type="PANTHER" id="PTHR46552:SF1">
    <property type="entry name" value="NADH-UBIQUINONE OXIDOREDUCTASE CHAIN 2"/>
    <property type="match status" value="1"/>
</dbReference>
<dbReference type="Pfam" id="PF00361">
    <property type="entry name" value="Proton_antipo_M"/>
    <property type="match status" value="1"/>
</dbReference>
<dbReference type="PRINTS" id="PR01436">
    <property type="entry name" value="NADHDHGNASE2"/>
</dbReference>
<geneLocation type="mitochondrion"/>
<evidence type="ECO:0000250" key="1"/>
<evidence type="ECO:0000255" key="2"/>
<evidence type="ECO:0000305" key="3"/>
<gene>
    <name type="primary">MT-ND2</name>
    <name type="synonym">MTND2</name>
    <name type="synonym">NADH2</name>
    <name type="synonym">ND2</name>
</gene>
<protein>
    <recommendedName>
        <fullName>NADH-ubiquinone oxidoreductase chain 2</fullName>
        <ecNumber>7.1.1.2</ecNumber>
    </recommendedName>
    <alternativeName>
        <fullName>NADH dehydrogenase subunit 2</fullName>
    </alternativeName>
</protein>
<sequence>MLSPLIQSTLLMTLGLGTLVTFSSTSWILAWIGLEINTIAIIPLMAKTHHPRSIEATTKYFIAQSAGSATLLVTACLAAWHSGNWAISPSSDPIILNAMTLALMFKLGMAPMHFWLPEVMAGLDLTTGMILATWQKLAPITLLIQIAQDQNNAFILGPALLSVFVGGWGGLNQTQTRKIIAYSSIAHMGWIASMAPFNPTITWVTTLIYCLLTSTTFINLNTLKANKITALTMNKHNQISQMLLLLLLLSLGGLPPLTGFTNKLLASVELANQNLVIYLFMMMMGSLLSLFFYTRMCYLSIILSPPCPTTNLTLWRVTPNKPMALMTMLSINLFILTPQLMAIFIMY</sequence>